<accession>P66947</accession>
<accession>A0A1R3Y084</accession>
<accession>Q50613</accession>
<accession>X2BJA5</accession>
<dbReference type="EC" id="2.2.1.6"/>
<dbReference type="EMBL" id="LT708304">
    <property type="protein sequence ID" value="SIU00455.1"/>
    <property type="molecule type" value="Genomic_DNA"/>
</dbReference>
<dbReference type="RefSeq" id="NP_855503.1">
    <property type="nucleotide sequence ID" value="NC_002945.3"/>
</dbReference>
<dbReference type="RefSeq" id="WP_003409218.1">
    <property type="nucleotide sequence ID" value="NC_002945.4"/>
</dbReference>
<dbReference type="SMR" id="P66947"/>
<dbReference type="KEGG" id="mbo:BQ2027_MB1851"/>
<dbReference type="PATRIC" id="fig|233413.5.peg.2031"/>
<dbReference type="UniPathway" id="UPA00047">
    <property type="reaction ID" value="UER00055"/>
</dbReference>
<dbReference type="UniPathway" id="UPA00049">
    <property type="reaction ID" value="UER00059"/>
</dbReference>
<dbReference type="Proteomes" id="UP000001419">
    <property type="component" value="Chromosome"/>
</dbReference>
<dbReference type="GO" id="GO:0005948">
    <property type="term" value="C:acetolactate synthase complex"/>
    <property type="evidence" value="ECO:0007669"/>
    <property type="project" value="TreeGrafter"/>
</dbReference>
<dbReference type="GO" id="GO:0003984">
    <property type="term" value="F:acetolactate synthase activity"/>
    <property type="evidence" value="ECO:0007669"/>
    <property type="project" value="UniProtKB-EC"/>
</dbReference>
<dbReference type="GO" id="GO:0050660">
    <property type="term" value="F:flavin adenine dinucleotide binding"/>
    <property type="evidence" value="ECO:0007669"/>
    <property type="project" value="TreeGrafter"/>
</dbReference>
<dbReference type="GO" id="GO:0000287">
    <property type="term" value="F:magnesium ion binding"/>
    <property type="evidence" value="ECO:0007669"/>
    <property type="project" value="InterPro"/>
</dbReference>
<dbReference type="GO" id="GO:0030976">
    <property type="term" value="F:thiamine pyrophosphate binding"/>
    <property type="evidence" value="ECO:0007669"/>
    <property type="project" value="InterPro"/>
</dbReference>
<dbReference type="GO" id="GO:0009097">
    <property type="term" value="P:isoleucine biosynthetic process"/>
    <property type="evidence" value="ECO:0007669"/>
    <property type="project" value="UniProtKB-UniPathway"/>
</dbReference>
<dbReference type="GO" id="GO:0009099">
    <property type="term" value="P:L-valine biosynthetic process"/>
    <property type="evidence" value="ECO:0007669"/>
    <property type="project" value="UniProtKB-UniPathway"/>
</dbReference>
<dbReference type="CDD" id="cd02004">
    <property type="entry name" value="TPP_BZL_OCoD_HPCL"/>
    <property type="match status" value="1"/>
</dbReference>
<dbReference type="CDD" id="cd07035">
    <property type="entry name" value="TPP_PYR_POX_like"/>
    <property type="match status" value="1"/>
</dbReference>
<dbReference type="FunFam" id="3.40.50.970:FF:000044">
    <property type="entry name" value="Putative acetolactate synthase IlvG"/>
    <property type="match status" value="1"/>
</dbReference>
<dbReference type="FunFam" id="3.40.50.970:FF:000088">
    <property type="entry name" value="Putative acetolactate synthase IlvG"/>
    <property type="match status" value="1"/>
</dbReference>
<dbReference type="Gene3D" id="3.40.50.970">
    <property type="match status" value="2"/>
</dbReference>
<dbReference type="Gene3D" id="3.40.50.1220">
    <property type="entry name" value="TPP-binding domain"/>
    <property type="match status" value="1"/>
</dbReference>
<dbReference type="InterPro" id="IPR029035">
    <property type="entry name" value="DHS-like_NAD/FAD-binding_dom"/>
</dbReference>
<dbReference type="InterPro" id="IPR029061">
    <property type="entry name" value="THDP-binding"/>
</dbReference>
<dbReference type="InterPro" id="IPR012000">
    <property type="entry name" value="Thiamin_PyroP_enz_cen_dom"/>
</dbReference>
<dbReference type="InterPro" id="IPR012001">
    <property type="entry name" value="Thiamin_PyroP_enz_TPP-bd_dom"/>
</dbReference>
<dbReference type="InterPro" id="IPR000399">
    <property type="entry name" value="TPP-bd_CS"/>
</dbReference>
<dbReference type="InterPro" id="IPR045229">
    <property type="entry name" value="TPP_enz"/>
</dbReference>
<dbReference type="InterPro" id="IPR011766">
    <property type="entry name" value="TPP_enzyme_TPP-bd"/>
</dbReference>
<dbReference type="NCBIfam" id="NF004516">
    <property type="entry name" value="PRK05858.1"/>
    <property type="match status" value="1"/>
</dbReference>
<dbReference type="PANTHER" id="PTHR18968:SF166">
    <property type="entry name" value="2-HYDROXYACYL-COA LYASE 2"/>
    <property type="match status" value="1"/>
</dbReference>
<dbReference type="PANTHER" id="PTHR18968">
    <property type="entry name" value="THIAMINE PYROPHOSPHATE ENZYMES"/>
    <property type="match status" value="1"/>
</dbReference>
<dbReference type="Pfam" id="PF02775">
    <property type="entry name" value="TPP_enzyme_C"/>
    <property type="match status" value="1"/>
</dbReference>
<dbReference type="Pfam" id="PF00205">
    <property type="entry name" value="TPP_enzyme_M"/>
    <property type="match status" value="1"/>
</dbReference>
<dbReference type="Pfam" id="PF02776">
    <property type="entry name" value="TPP_enzyme_N"/>
    <property type="match status" value="1"/>
</dbReference>
<dbReference type="SUPFAM" id="SSF52467">
    <property type="entry name" value="DHS-like NAD/FAD-binding domain"/>
    <property type="match status" value="1"/>
</dbReference>
<dbReference type="SUPFAM" id="SSF52518">
    <property type="entry name" value="Thiamin diphosphate-binding fold (THDP-binding)"/>
    <property type="match status" value="2"/>
</dbReference>
<dbReference type="PROSITE" id="PS00187">
    <property type="entry name" value="TPP_ENZYMES"/>
    <property type="match status" value="1"/>
</dbReference>
<reference key="1">
    <citation type="journal article" date="2003" name="Proc. Natl. Acad. Sci. U.S.A.">
        <title>The complete genome sequence of Mycobacterium bovis.</title>
        <authorList>
            <person name="Garnier T."/>
            <person name="Eiglmeier K."/>
            <person name="Camus J.-C."/>
            <person name="Medina N."/>
            <person name="Mansoor H."/>
            <person name="Pryor M."/>
            <person name="Duthoy S."/>
            <person name="Grondin S."/>
            <person name="Lacroix C."/>
            <person name="Monsempe C."/>
            <person name="Simon S."/>
            <person name="Harris B."/>
            <person name="Atkin R."/>
            <person name="Doggett J."/>
            <person name="Mayes R."/>
            <person name="Keating L."/>
            <person name="Wheeler P.R."/>
            <person name="Parkhill J."/>
            <person name="Barrell B.G."/>
            <person name="Cole S.T."/>
            <person name="Gordon S.V."/>
            <person name="Hewinson R.G."/>
        </authorList>
    </citation>
    <scope>NUCLEOTIDE SEQUENCE [LARGE SCALE GENOMIC DNA]</scope>
    <source>
        <strain>ATCC BAA-935 / AF2122/97</strain>
    </source>
</reference>
<reference key="2">
    <citation type="journal article" date="2017" name="Genome Announc.">
        <title>Updated reference genome sequence and annotation of Mycobacterium bovis AF2122/97.</title>
        <authorList>
            <person name="Malone K.M."/>
            <person name="Farrell D."/>
            <person name="Stuber T.P."/>
            <person name="Schubert O.T."/>
            <person name="Aebersold R."/>
            <person name="Robbe-Austerman S."/>
            <person name="Gordon S.V."/>
        </authorList>
    </citation>
    <scope>NUCLEOTIDE SEQUENCE [LARGE SCALE GENOMIC DNA]</scope>
    <scope>GENOME REANNOTATION</scope>
    <source>
        <strain>ATCC BAA-935 / AF2122/97</strain>
    </source>
</reference>
<sequence>MSTDTAPAQTMHAGRLIARRLKASGIDTVFTLSGGHLFSIYDGCREEGIRLIDTRHEQTAAFAAEGWSKVTRVPGVAALTAGPGITNGMSAMAAAQQNQSPLVVLGGRAPALRWGMGSLQEIDHVPFVAPVARFAATAQSAENAGLLVDQALQAAVSAPSGVAFVDFPMDHAFSMSSDNGRPGALTELPAGPTPAGDALDRAAGLLSTAQRPVIMAGTNVWWGHAEAALLRLVEERHIPVLMNGMARGVVPADHRLAFSRARSKALGEADVALIVGVPMDFRLGFGGVFGSTTQLIVADRVEPAREHPRPVAAGLYGDLTATLSALAGSGGTDHQGWIEELATAETMARDLEKAELVDDRIPLHPMRVYAELAALLERDALVVIDAGDFGSYAGRMIDSYLPGCWLDSGPFGCLGSGPGYALAAKLARPQRQVVLLQGDGAFGFSGMEWDTLVRHNVAVVSVIGNNGIWGLEKHPMEALYGYSVVAELRPGTRYDEVVRALGGHGELVSVPAELRPALERAFASGLPAVVNVLTDPSVAYPRRSNLA</sequence>
<keyword id="KW-0028">Amino-acid biosynthesis</keyword>
<keyword id="KW-0100">Branched-chain amino acid biosynthesis</keyword>
<keyword id="KW-0274">FAD</keyword>
<keyword id="KW-0285">Flavoprotein</keyword>
<keyword id="KW-0460">Magnesium</keyword>
<keyword id="KW-0479">Metal-binding</keyword>
<keyword id="KW-1185">Reference proteome</keyword>
<keyword id="KW-0786">Thiamine pyrophosphate</keyword>
<keyword id="KW-0808">Transferase</keyword>
<organism>
    <name type="scientific">Mycobacterium bovis (strain ATCC BAA-935 / AF2122/97)</name>
    <dbReference type="NCBI Taxonomy" id="233413"/>
    <lineage>
        <taxon>Bacteria</taxon>
        <taxon>Bacillati</taxon>
        <taxon>Actinomycetota</taxon>
        <taxon>Actinomycetes</taxon>
        <taxon>Mycobacteriales</taxon>
        <taxon>Mycobacteriaceae</taxon>
        <taxon>Mycobacterium</taxon>
        <taxon>Mycobacterium tuberculosis complex</taxon>
    </lineage>
</organism>
<name>ILVG_MYCBO</name>
<proteinExistence type="inferred from homology"/>
<evidence type="ECO:0000250" key="1"/>
<evidence type="ECO:0000305" key="2"/>
<protein>
    <recommendedName>
        <fullName>Probable acetolactate synthase</fullName>
        <ecNumber>2.2.1.6</ecNumber>
    </recommendedName>
    <alternativeName>
        <fullName>ALS</fullName>
    </alternativeName>
    <alternativeName>
        <fullName>Acetohydroxy-acid synthase</fullName>
    </alternativeName>
</protein>
<feature type="chain" id="PRO_0000090804" description="Probable acetolactate synthase">
    <location>
        <begin position="1"/>
        <end position="547"/>
    </location>
</feature>
<feature type="region of interest" description="Thiamine pyrophosphate binding">
    <location>
        <begin position="388"/>
        <end position="468"/>
    </location>
</feature>
<feature type="binding site" evidence="1">
    <location>
        <position position="57"/>
    </location>
    <ligand>
        <name>thiamine diphosphate</name>
        <dbReference type="ChEBI" id="CHEBI:58937"/>
    </ligand>
</feature>
<feature type="binding site" evidence="1">
    <location>
        <position position="159"/>
    </location>
    <ligand>
        <name>FAD</name>
        <dbReference type="ChEBI" id="CHEBI:57692"/>
    </ligand>
</feature>
<feature type="binding site" evidence="1">
    <location>
        <begin position="299"/>
        <end position="318"/>
    </location>
    <ligand>
        <name>FAD</name>
        <dbReference type="ChEBI" id="CHEBI:57692"/>
    </ligand>
</feature>
<feature type="binding site" evidence="1">
    <location>
        <position position="439"/>
    </location>
    <ligand>
        <name>Mg(2+)</name>
        <dbReference type="ChEBI" id="CHEBI:18420"/>
    </ligand>
</feature>
<feature type="binding site" evidence="1">
    <location>
        <position position="466"/>
    </location>
    <ligand>
        <name>Mg(2+)</name>
        <dbReference type="ChEBI" id="CHEBI:18420"/>
    </ligand>
</feature>
<comment type="catalytic activity">
    <reaction>
        <text>2 pyruvate + H(+) = (2S)-2-acetolactate + CO2</text>
        <dbReference type="Rhea" id="RHEA:25249"/>
        <dbReference type="ChEBI" id="CHEBI:15361"/>
        <dbReference type="ChEBI" id="CHEBI:15378"/>
        <dbReference type="ChEBI" id="CHEBI:16526"/>
        <dbReference type="ChEBI" id="CHEBI:58476"/>
        <dbReference type="EC" id="2.2.1.6"/>
    </reaction>
</comment>
<comment type="cofactor">
    <cofactor evidence="1">
        <name>Mg(2+)</name>
        <dbReference type="ChEBI" id="CHEBI:18420"/>
    </cofactor>
    <text evidence="1">Binds 1 Mg(2+) ion per subunit.</text>
</comment>
<comment type="cofactor">
    <cofactor evidence="1">
        <name>thiamine diphosphate</name>
        <dbReference type="ChEBI" id="CHEBI:58937"/>
    </cofactor>
    <text evidence="1">Binds 1 thiamine pyrophosphate per subunit.</text>
</comment>
<comment type="pathway">
    <text>Amino-acid biosynthesis; L-isoleucine biosynthesis; L-isoleucine from 2-oxobutanoate: step 1/4.</text>
</comment>
<comment type="pathway">
    <text>Amino-acid biosynthesis; L-valine biosynthesis; L-valine from pyruvate: step 1/4.</text>
</comment>
<comment type="similarity">
    <text evidence="2">Belongs to the TPP enzyme family.</text>
</comment>
<gene>
    <name type="primary">ilvG</name>
    <name type="ordered locus">BQ2027_MB1851</name>
</gene>